<keyword id="KW-0017">Alkaloid metabolism</keyword>
<keyword id="KW-0274">FAD</keyword>
<keyword id="KW-0285">Flavoprotein</keyword>
<keyword id="KW-0503">Monooxygenase</keyword>
<keyword id="KW-0560">Oxidoreductase</keyword>
<feature type="chain" id="PRO_0000448803" description="FAD-dependent monooxygenase notI'">
    <location>
        <begin position="1"/>
        <end position="433"/>
    </location>
</feature>
<feature type="active site" evidence="3">
    <location>
        <position position="195"/>
    </location>
</feature>
<feature type="binding site" evidence="2">
    <location>
        <position position="45"/>
    </location>
    <ligand>
        <name>FAD</name>
        <dbReference type="ChEBI" id="CHEBI:57692"/>
    </ligand>
</feature>
<feature type="binding site" evidence="2">
    <location>
        <position position="117"/>
    </location>
    <ligand>
        <name>FAD</name>
        <dbReference type="ChEBI" id="CHEBI:57692"/>
    </ligand>
</feature>
<feature type="binding site" evidence="2">
    <location>
        <position position="314"/>
    </location>
    <ligand>
        <name>FAD</name>
        <dbReference type="ChEBI" id="CHEBI:57692"/>
    </ligand>
</feature>
<feature type="binding site" evidence="2">
    <location>
        <position position="327"/>
    </location>
    <ligand>
        <name>FAD</name>
        <dbReference type="ChEBI" id="CHEBI:57692"/>
    </ligand>
</feature>
<accession>L7WR46</accession>
<dbReference type="EC" id="1.-.-.-" evidence="9"/>
<dbReference type="EMBL" id="JQ708194">
    <property type="protein sequence ID" value="AGC83580.1"/>
    <property type="molecule type" value="Genomic_DNA"/>
</dbReference>
<dbReference type="SMR" id="L7WR46"/>
<dbReference type="VEuPathDB" id="FungiDB:ASPVEDRAFT_195793"/>
<dbReference type="GO" id="GO:0071949">
    <property type="term" value="F:FAD binding"/>
    <property type="evidence" value="ECO:0007669"/>
    <property type="project" value="InterPro"/>
</dbReference>
<dbReference type="GO" id="GO:0004497">
    <property type="term" value="F:monooxygenase activity"/>
    <property type="evidence" value="ECO:0007669"/>
    <property type="project" value="UniProtKB-KW"/>
</dbReference>
<dbReference type="GO" id="GO:0009820">
    <property type="term" value="P:alkaloid metabolic process"/>
    <property type="evidence" value="ECO:0007669"/>
    <property type="project" value="UniProtKB-KW"/>
</dbReference>
<dbReference type="GO" id="GO:0009058">
    <property type="term" value="P:biosynthetic process"/>
    <property type="evidence" value="ECO:0007669"/>
    <property type="project" value="UniProtKB-ARBA"/>
</dbReference>
<dbReference type="Gene3D" id="3.50.50.60">
    <property type="entry name" value="FAD/NAD(P)-binding domain"/>
    <property type="match status" value="1"/>
</dbReference>
<dbReference type="InterPro" id="IPR002938">
    <property type="entry name" value="FAD-bd"/>
</dbReference>
<dbReference type="InterPro" id="IPR050493">
    <property type="entry name" value="FAD-dep_Monooxygenase_BioMet"/>
</dbReference>
<dbReference type="InterPro" id="IPR036188">
    <property type="entry name" value="FAD/NAD-bd_sf"/>
</dbReference>
<dbReference type="PANTHER" id="PTHR13789">
    <property type="entry name" value="MONOOXYGENASE"/>
    <property type="match status" value="1"/>
</dbReference>
<dbReference type="PANTHER" id="PTHR13789:SF236">
    <property type="entry name" value="MONOOXYGENASE, PUTATIVE (AFU_ORTHOLOGUE AFUA_6G12060)-RELATED"/>
    <property type="match status" value="1"/>
</dbReference>
<dbReference type="Pfam" id="PF01494">
    <property type="entry name" value="FAD_binding_3"/>
    <property type="match status" value="1"/>
</dbReference>
<dbReference type="PRINTS" id="PR00420">
    <property type="entry name" value="RNGMNOXGNASE"/>
</dbReference>
<dbReference type="SUPFAM" id="SSF51905">
    <property type="entry name" value="FAD/NAD(P)-binding domain"/>
    <property type="match status" value="1"/>
</dbReference>
<evidence type="ECO:0000250" key="1">
    <source>
        <dbReference type="UniProtKB" id="A6T923"/>
    </source>
</evidence>
<evidence type="ECO:0000250" key="2">
    <source>
        <dbReference type="UniProtKB" id="B8M9J8"/>
    </source>
</evidence>
<evidence type="ECO:0000250" key="3">
    <source>
        <dbReference type="UniProtKB" id="L0E4H0"/>
    </source>
</evidence>
<evidence type="ECO:0000269" key="4">
    <source>
    </source>
</evidence>
<evidence type="ECO:0000269" key="5">
    <source>
    </source>
</evidence>
<evidence type="ECO:0000269" key="6">
    <source>
    </source>
</evidence>
<evidence type="ECO:0000303" key="7">
    <source>
    </source>
</evidence>
<evidence type="ECO:0000305" key="8"/>
<evidence type="ECO:0000305" key="9">
    <source>
    </source>
</evidence>
<comment type="function">
    <text evidence="5 6 9">FAD-dependent monooxygenase; part of the gene cluster that mediates the biosynthesis of notoamide, a fungal indole alkaloid that belongs to a family of natural products containing a characteristic bicyclo[2.2.2]diazaoctane core (PubMed:23213353). The first step of notoamide biosynthesis involves coupling of L-proline and L-tryptophan by the bimodular NRPS notE', to produce cyclo-L-tryptophan-L-proline called brevianamide F (Probable). The reverse prenyltransferase notF' then acts as a deoxybrevianamide E synthase and converts brevianamide F to deoxybrevianamide E via reverse prenylation at C-2 of the indole ring leading to the bicyclo[2.2.2]diazaoctane core (Probable) (PubMed:22660767). Deoxybrevianamide E is further hydroxylated at C-6 of the indole ring, likely catalyzed by the cytochrome P450 monooxygenase notG', to yield 6-hydroxy-deoxybrevianamide E (Probable). 6-hydroxy-deoxybrevianamide E is a specific substrate of the prenyltransferase notC' for normal prenylation at C-7 to produce 6-hydroxy-7-prenyl-deoxybrevianamide, also called notoamide S (Probable). As the proposed pivotal branching point in notoamide biosynthesis, notoamide S can be diverted to notoamide E through an oxidative pyran ring closure putatively catalyzed by either notH' cytochrome P450 monooxygenase or the notD' FAD-linked oxidoreductase (Probable). This step would be followed by an indole 2,3-epoxidation-initiated pinacol-like rearrangement catalyzed by the notB' FAD-dependent monooxygenase leading to the formation of notoamide C and notoamide D (Probable). On the other hand notoamide S is converted to notoamide T by notH' (or notD'), a bifunctional oxidase that also functions as the intramolecular Diels-Alderase responsible for generation of (-)-notoamide T (Probable). To generate antipodal (+)-notoaminide T, notH (or notD) in Aspergillus strain MF297-2 is expected to catalyze a Diels-Alder reaction leading to the opposite stereochemistry (Probable). The remaining oxidoreductase notD' (or notH') likely catalyzes the oxidative pyran ring formation to yield (-)-stephacidin A (Probable). The FAD-dependent monooxygenase notI' is highly similar to notB' and is predicted to catalyze a similar conversion from (-)-stephacidin A to (+)-notoamide B via the 2,3-epoxidation of (-)-stephacidin A followed by a pinacol-type rearrangement (Probable). Finally, it remains unclear which enzyme could be responsible for the final hydroxylation steps leading to notoamide A and sclerotiamide (Probable).</text>
</comment>
<comment type="cofactor">
    <cofactor evidence="1">
        <name>FAD</name>
        <dbReference type="ChEBI" id="CHEBI:57692"/>
    </cofactor>
</comment>
<comment type="pathway">
    <text evidence="9">Alkaloid biosynthesis.</text>
</comment>
<comment type="biotechnology">
    <text evidence="4">Notoamides have been shown to exhibit antitumoral activities (PubMed:17304611). Notoamides A-C show moderate cytotoxicity against HeLa and L1210 cells with IC(50) values in the range of 22-52 mg/ml, but the IC(50) value of notoamide D is greater than 100 mg/ml (PubMed:17304611). Moreover, notoamide C induces G2/M-cell cycle arrest at a concentration of 6.3 mg/ml (PubMed:17304611).</text>
</comment>
<comment type="similarity">
    <text evidence="8">Belongs to the paxM FAD-dependent monooxygenase family.</text>
</comment>
<name>NOTI_ASPVE</name>
<gene>
    <name evidence="7" type="primary">notI'</name>
</gene>
<reference key="1">
    <citation type="journal article" date="2012" name="Med. Chem. Commun.">
        <title>Comparative analysis of the biosynthetic systems for fungal bicyclo[2.2.2]diazaoctane indole alkaloids: the (+)/(-)-notoamide, paraherquamide and malbrancheamide pathways.</title>
        <authorList>
            <person name="Li S."/>
            <person name="Anand K."/>
            <person name="Tran H."/>
            <person name="Yu F."/>
            <person name="Finefield J.M."/>
            <person name="Sunderhaus J.D."/>
            <person name="McAfoos T.J."/>
            <person name="Tsukamoto S."/>
            <person name="Williams R.M."/>
            <person name="Sherman D.H."/>
        </authorList>
    </citation>
    <scope>NUCLEOTIDE SEQUENCE [GENOMIC DNA]</scope>
    <scope>FUNCTION</scope>
    <scope>PATHWAY</scope>
    <source>
        <strain>NRRL 35600</strain>
    </source>
</reference>
<reference key="2">
    <citation type="journal article" date="2007" name="Angew. Chem. Int. Ed.">
        <title>Notoamides A-D: prenylated indole alkaloids isolated from a marine-derived fungus, Aspergillus sp.</title>
        <authorList>
            <person name="Kato H."/>
            <person name="Yoshida T."/>
            <person name="Tokue T."/>
            <person name="Nojiri Y."/>
            <person name="Hirota H."/>
            <person name="Ohta T."/>
            <person name="Williams R.M."/>
            <person name="Tsukamoto S."/>
        </authorList>
    </citation>
    <scope>BIOTECHNOLOGY</scope>
</reference>
<reference key="3">
    <citation type="journal article" date="2013" name="Appl. Microbiol. Biotechnol.">
        <title>Identification of a brevianamide F reverse prenyltransferase BrePT from Aspergillus versicolor with a broad substrate specificity towards tryptophan-containing cyclic dipeptides.</title>
        <authorList>
            <person name="Yin S."/>
            <person name="Yu X."/>
            <person name="Wang Q."/>
            <person name="Liu X.Q."/>
            <person name="Li S.M."/>
        </authorList>
    </citation>
    <scope>FUNCTION</scope>
</reference>
<protein>
    <recommendedName>
        <fullName evidence="7">FAD-dependent monooxygenase notI'</fullName>
        <ecNumber evidence="9">1.-.-.-</ecNumber>
    </recommendedName>
    <alternativeName>
        <fullName evidence="7">Notoamide biosynthesis cluster protein I'</fullName>
    </alternativeName>
</protein>
<proteinExistence type="evidence at protein level"/>
<organism>
    <name type="scientific">Aspergillus versicolor</name>
    <dbReference type="NCBI Taxonomy" id="46472"/>
    <lineage>
        <taxon>Eukaryota</taxon>
        <taxon>Fungi</taxon>
        <taxon>Dikarya</taxon>
        <taxon>Ascomycota</taxon>
        <taxon>Pezizomycotina</taxon>
        <taxon>Eurotiomycetes</taxon>
        <taxon>Eurotiomycetidae</taxon>
        <taxon>Eurotiales</taxon>
        <taxon>Aspergillaceae</taxon>
        <taxon>Aspergillus</taxon>
        <taxon>Aspergillus subgen. Nidulantes</taxon>
    </lineage>
</organism>
<sequence length="433" mass="47044">MAIDASGAAAPNSSGITVIIVGLGPTGLAAAIECHRRGHKVICFERNPKSYRLGDLINVTGNAARVLQGWGNGSVINDLQAFQCNLDTLEVYDETGDLKLSAPYNANQAKDNYMLRRSRLLDIFLQHLKNLDVDIHLGTEVTDYWETESSAGVTVGGKRIAADCVVVADGVHSKGRPQVSAEPFDLPSTDGTAFRAFFHASEIAQDPEASWILQDAGEGDCFKTFYGKGLVMMLGTAENHEYIFWSCGSKENVLAQSSAVAQVLDLIGDWPVSKRLAPLISKTPSDNCLDQTLFTRSPLNKWVSRKGRMIVLGDAAHPFLPHAGQGANQGIEDAAVLALCLQIAGKDDVPLALRVTEKLRYQRVAAIQKRGVEARDQSLSVDWENGGFTKKLTLYPAWLHDQDCIKQVYEEFDKAVAAVTKGHECTFGGIPVD</sequence>